<reference key="1">
    <citation type="journal article" date="2009" name="PLoS ONE">
        <title>Genome analysis of the anaerobic thermohalophilic bacterium Halothermothrix orenii.</title>
        <authorList>
            <person name="Mavromatis K."/>
            <person name="Ivanova N."/>
            <person name="Anderson I."/>
            <person name="Lykidis A."/>
            <person name="Hooper S.D."/>
            <person name="Sun H."/>
            <person name="Kunin V."/>
            <person name="Lapidus A."/>
            <person name="Hugenholtz P."/>
            <person name="Patel B."/>
            <person name="Kyrpides N.C."/>
        </authorList>
    </citation>
    <scope>NUCLEOTIDE SEQUENCE [LARGE SCALE GENOMIC DNA]</scope>
    <source>
        <strain>H 168 / OCM 544 / DSM 9562</strain>
    </source>
</reference>
<dbReference type="EC" id="2.7.7.8" evidence="1"/>
<dbReference type="EMBL" id="CP001098">
    <property type="protein sequence ID" value="ACL69547.1"/>
    <property type="molecule type" value="Genomic_DNA"/>
</dbReference>
<dbReference type="RefSeq" id="WP_012635735.1">
    <property type="nucleotide sequence ID" value="NC_011899.1"/>
</dbReference>
<dbReference type="SMR" id="B8CW78"/>
<dbReference type="STRING" id="373903.Hore_07900"/>
<dbReference type="KEGG" id="hor:Hore_07900"/>
<dbReference type="eggNOG" id="COG1185">
    <property type="taxonomic scope" value="Bacteria"/>
</dbReference>
<dbReference type="HOGENOM" id="CLU_004217_2_2_9"/>
<dbReference type="OrthoDB" id="9804305at2"/>
<dbReference type="Proteomes" id="UP000000719">
    <property type="component" value="Chromosome"/>
</dbReference>
<dbReference type="GO" id="GO:0005829">
    <property type="term" value="C:cytosol"/>
    <property type="evidence" value="ECO:0007669"/>
    <property type="project" value="TreeGrafter"/>
</dbReference>
<dbReference type="GO" id="GO:0000175">
    <property type="term" value="F:3'-5'-RNA exonuclease activity"/>
    <property type="evidence" value="ECO:0007669"/>
    <property type="project" value="TreeGrafter"/>
</dbReference>
<dbReference type="GO" id="GO:0000287">
    <property type="term" value="F:magnesium ion binding"/>
    <property type="evidence" value="ECO:0007669"/>
    <property type="project" value="UniProtKB-UniRule"/>
</dbReference>
<dbReference type="GO" id="GO:0004654">
    <property type="term" value="F:polyribonucleotide nucleotidyltransferase activity"/>
    <property type="evidence" value="ECO:0007669"/>
    <property type="project" value="UniProtKB-UniRule"/>
</dbReference>
<dbReference type="GO" id="GO:0003723">
    <property type="term" value="F:RNA binding"/>
    <property type="evidence" value="ECO:0007669"/>
    <property type="project" value="UniProtKB-UniRule"/>
</dbReference>
<dbReference type="GO" id="GO:0006402">
    <property type="term" value="P:mRNA catabolic process"/>
    <property type="evidence" value="ECO:0007669"/>
    <property type="project" value="UniProtKB-UniRule"/>
</dbReference>
<dbReference type="GO" id="GO:0006396">
    <property type="term" value="P:RNA processing"/>
    <property type="evidence" value="ECO:0007669"/>
    <property type="project" value="InterPro"/>
</dbReference>
<dbReference type="CDD" id="cd02393">
    <property type="entry name" value="KH-I_PNPase"/>
    <property type="match status" value="1"/>
</dbReference>
<dbReference type="CDD" id="cd11363">
    <property type="entry name" value="RNase_PH_PNPase_1"/>
    <property type="match status" value="1"/>
</dbReference>
<dbReference type="CDD" id="cd11364">
    <property type="entry name" value="RNase_PH_PNPase_2"/>
    <property type="match status" value="1"/>
</dbReference>
<dbReference type="CDD" id="cd04472">
    <property type="entry name" value="S1_PNPase"/>
    <property type="match status" value="1"/>
</dbReference>
<dbReference type="FunFam" id="2.40.50.140:FF:000023">
    <property type="entry name" value="Polyribonucleotide nucleotidyltransferase"/>
    <property type="match status" value="1"/>
</dbReference>
<dbReference type="FunFam" id="3.30.1370.10:FF:000001">
    <property type="entry name" value="Polyribonucleotide nucleotidyltransferase"/>
    <property type="match status" value="1"/>
</dbReference>
<dbReference type="FunFam" id="3.30.230.70:FF:000001">
    <property type="entry name" value="Polyribonucleotide nucleotidyltransferase"/>
    <property type="match status" value="1"/>
</dbReference>
<dbReference type="FunFam" id="3.30.230.70:FF:000002">
    <property type="entry name" value="Polyribonucleotide nucleotidyltransferase"/>
    <property type="match status" value="1"/>
</dbReference>
<dbReference type="Gene3D" id="3.30.230.70">
    <property type="entry name" value="GHMP Kinase, N-terminal domain"/>
    <property type="match status" value="2"/>
</dbReference>
<dbReference type="Gene3D" id="3.30.1370.10">
    <property type="entry name" value="K Homology domain, type 1"/>
    <property type="match status" value="1"/>
</dbReference>
<dbReference type="Gene3D" id="2.40.50.140">
    <property type="entry name" value="Nucleic acid-binding proteins"/>
    <property type="match status" value="1"/>
</dbReference>
<dbReference type="HAMAP" id="MF_01595">
    <property type="entry name" value="PNPase"/>
    <property type="match status" value="1"/>
</dbReference>
<dbReference type="InterPro" id="IPR001247">
    <property type="entry name" value="ExoRNase_PH_dom1"/>
</dbReference>
<dbReference type="InterPro" id="IPR015847">
    <property type="entry name" value="ExoRNase_PH_dom2"/>
</dbReference>
<dbReference type="InterPro" id="IPR036345">
    <property type="entry name" value="ExoRNase_PH_dom2_sf"/>
</dbReference>
<dbReference type="InterPro" id="IPR004087">
    <property type="entry name" value="KH_dom"/>
</dbReference>
<dbReference type="InterPro" id="IPR004088">
    <property type="entry name" value="KH_dom_type_1"/>
</dbReference>
<dbReference type="InterPro" id="IPR036612">
    <property type="entry name" value="KH_dom_type_1_sf"/>
</dbReference>
<dbReference type="InterPro" id="IPR012340">
    <property type="entry name" value="NA-bd_OB-fold"/>
</dbReference>
<dbReference type="InterPro" id="IPR012162">
    <property type="entry name" value="PNPase"/>
</dbReference>
<dbReference type="InterPro" id="IPR027408">
    <property type="entry name" value="PNPase/RNase_PH_dom_sf"/>
</dbReference>
<dbReference type="InterPro" id="IPR015848">
    <property type="entry name" value="PNPase_PH_RNA-bd_bac/org-type"/>
</dbReference>
<dbReference type="InterPro" id="IPR020568">
    <property type="entry name" value="Ribosomal_Su5_D2-typ_SF"/>
</dbReference>
<dbReference type="InterPro" id="IPR003029">
    <property type="entry name" value="S1_domain"/>
</dbReference>
<dbReference type="NCBIfam" id="TIGR03591">
    <property type="entry name" value="polynuc_phos"/>
    <property type="match status" value="1"/>
</dbReference>
<dbReference type="NCBIfam" id="NF008805">
    <property type="entry name" value="PRK11824.1"/>
    <property type="match status" value="1"/>
</dbReference>
<dbReference type="PANTHER" id="PTHR11252">
    <property type="entry name" value="POLYRIBONUCLEOTIDE NUCLEOTIDYLTRANSFERASE"/>
    <property type="match status" value="1"/>
</dbReference>
<dbReference type="PANTHER" id="PTHR11252:SF0">
    <property type="entry name" value="POLYRIBONUCLEOTIDE NUCLEOTIDYLTRANSFERASE 1, MITOCHONDRIAL"/>
    <property type="match status" value="1"/>
</dbReference>
<dbReference type="Pfam" id="PF00013">
    <property type="entry name" value="KH_1"/>
    <property type="match status" value="1"/>
</dbReference>
<dbReference type="Pfam" id="PF03726">
    <property type="entry name" value="PNPase"/>
    <property type="match status" value="1"/>
</dbReference>
<dbReference type="Pfam" id="PF01138">
    <property type="entry name" value="RNase_PH"/>
    <property type="match status" value="2"/>
</dbReference>
<dbReference type="Pfam" id="PF03725">
    <property type="entry name" value="RNase_PH_C"/>
    <property type="match status" value="2"/>
</dbReference>
<dbReference type="Pfam" id="PF00575">
    <property type="entry name" value="S1"/>
    <property type="match status" value="1"/>
</dbReference>
<dbReference type="PIRSF" id="PIRSF005499">
    <property type="entry name" value="PNPase"/>
    <property type="match status" value="1"/>
</dbReference>
<dbReference type="SMART" id="SM00322">
    <property type="entry name" value="KH"/>
    <property type="match status" value="1"/>
</dbReference>
<dbReference type="SMART" id="SM00316">
    <property type="entry name" value="S1"/>
    <property type="match status" value="1"/>
</dbReference>
<dbReference type="SUPFAM" id="SSF54791">
    <property type="entry name" value="Eukaryotic type KH-domain (KH-domain type I)"/>
    <property type="match status" value="1"/>
</dbReference>
<dbReference type="SUPFAM" id="SSF50249">
    <property type="entry name" value="Nucleic acid-binding proteins"/>
    <property type="match status" value="1"/>
</dbReference>
<dbReference type="SUPFAM" id="SSF55666">
    <property type="entry name" value="Ribonuclease PH domain 2-like"/>
    <property type="match status" value="2"/>
</dbReference>
<dbReference type="SUPFAM" id="SSF54211">
    <property type="entry name" value="Ribosomal protein S5 domain 2-like"/>
    <property type="match status" value="2"/>
</dbReference>
<dbReference type="PROSITE" id="PS50084">
    <property type="entry name" value="KH_TYPE_1"/>
    <property type="match status" value="1"/>
</dbReference>
<dbReference type="PROSITE" id="PS50126">
    <property type="entry name" value="S1"/>
    <property type="match status" value="1"/>
</dbReference>
<gene>
    <name evidence="1" type="primary">pnp</name>
    <name type="ordered locus">Hore_07900</name>
</gene>
<accession>B8CW78</accession>
<proteinExistence type="inferred from homology"/>
<evidence type="ECO:0000255" key="1">
    <source>
        <dbReference type="HAMAP-Rule" id="MF_01595"/>
    </source>
</evidence>
<keyword id="KW-0963">Cytoplasm</keyword>
<keyword id="KW-0460">Magnesium</keyword>
<keyword id="KW-0479">Metal-binding</keyword>
<keyword id="KW-0548">Nucleotidyltransferase</keyword>
<keyword id="KW-1185">Reference proteome</keyword>
<keyword id="KW-0694">RNA-binding</keyword>
<keyword id="KW-0808">Transferase</keyword>
<feature type="chain" id="PRO_1000185739" description="Polyribonucleotide nucleotidyltransferase">
    <location>
        <begin position="1"/>
        <end position="705"/>
    </location>
</feature>
<feature type="domain" description="KH" evidence="1">
    <location>
        <begin position="559"/>
        <end position="618"/>
    </location>
</feature>
<feature type="domain" description="S1 motif" evidence="1">
    <location>
        <begin position="628"/>
        <end position="696"/>
    </location>
</feature>
<feature type="binding site" evidence="1">
    <location>
        <position position="492"/>
    </location>
    <ligand>
        <name>Mg(2+)</name>
        <dbReference type="ChEBI" id="CHEBI:18420"/>
    </ligand>
</feature>
<feature type="binding site" evidence="1">
    <location>
        <position position="498"/>
    </location>
    <ligand>
        <name>Mg(2+)</name>
        <dbReference type="ChEBI" id="CHEBI:18420"/>
    </ligand>
</feature>
<organism>
    <name type="scientific">Halothermothrix orenii (strain H 168 / OCM 544 / DSM 9562)</name>
    <dbReference type="NCBI Taxonomy" id="373903"/>
    <lineage>
        <taxon>Bacteria</taxon>
        <taxon>Bacillati</taxon>
        <taxon>Bacillota</taxon>
        <taxon>Clostridia</taxon>
        <taxon>Halanaerobiales</taxon>
        <taxon>Halothermotrichaceae</taxon>
        <taxon>Halothermothrix</taxon>
    </lineage>
</organism>
<sequence length="705" mass="78672">MHKDWTIDVAGGKMKFETGKYAKQANGSVVARYGDTTVLVTATMSEPREGIDYFPLMVNYEERVYAIGKIPGSITRREGRPRDVATLAARLIDRPLRPLFPEGFRHDVQIIATVLSVDNDCEPDILALNGASVALTLSDIPFDGPIGGVKVGLVDGELVINPDEEEREKSKLDLTVAGTRDAVLMVEAGANEVSEDVMLDAIELAHQEIKRLVLLQEEIGEEAGKKKFEFTKDEITPELDEEIRKYISSDMENALRIPEKLERNAKVDEIKENTLQYFEDMFENNGLDNEEKNKQLKMVERTIEKVMKEKVRKMIIEEGIRPDGRKPDEIRPIWCEVGTLPRVHGSGVFTRGQTQALSVVTLGATSDEQILFGLGEEETKRYMHHYNFPPYSVGETSPLRSPGRREIGHGALGERALQPVIPDQEEFPYTIRVVSEVLESNGSTSQASICGSTLALMDAGVPIKEPVAGIAMGLLKEDEKVVILSDIQGLEDFYGDMDFKVAGTRNGITALQMDIKIHGISKEILKKALKRAREGRLYILDKMLQVIDKPRPELSPYAPLMITMKVSPDKIRHIIGPGGKIINKIIDETGVEIDIDDDGSVYILAQDQESGNRAKEIINKLTKEVEVGDIYEGRVKKITNFGAFVEILPGREGLVHISELADHHVKKVEDIVKIGDRIPVKVIEIDELGRINLSRKRALKEQKKE</sequence>
<protein>
    <recommendedName>
        <fullName evidence="1">Polyribonucleotide nucleotidyltransferase</fullName>
        <ecNumber evidence="1">2.7.7.8</ecNumber>
    </recommendedName>
    <alternativeName>
        <fullName evidence="1">Polynucleotide phosphorylase</fullName>
        <shortName evidence="1">PNPase</shortName>
    </alternativeName>
</protein>
<comment type="function">
    <text evidence="1">Involved in mRNA degradation. Catalyzes the phosphorolysis of single-stranded polyribonucleotides processively in the 3'- to 5'-direction.</text>
</comment>
<comment type="catalytic activity">
    <reaction evidence="1">
        <text>RNA(n+1) + phosphate = RNA(n) + a ribonucleoside 5'-diphosphate</text>
        <dbReference type="Rhea" id="RHEA:22096"/>
        <dbReference type="Rhea" id="RHEA-COMP:14527"/>
        <dbReference type="Rhea" id="RHEA-COMP:17342"/>
        <dbReference type="ChEBI" id="CHEBI:43474"/>
        <dbReference type="ChEBI" id="CHEBI:57930"/>
        <dbReference type="ChEBI" id="CHEBI:140395"/>
        <dbReference type="EC" id="2.7.7.8"/>
    </reaction>
</comment>
<comment type="cofactor">
    <cofactor evidence="1">
        <name>Mg(2+)</name>
        <dbReference type="ChEBI" id="CHEBI:18420"/>
    </cofactor>
</comment>
<comment type="subcellular location">
    <subcellularLocation>
        <location evidence="1">Cytoplasm</location>
    </subcellularLocation>
</comment>
<comment type="similarity">
    <text evidence="1">Belongs to the polyribonucleotide nucleotidyltransferase family.</text>
</comment>
<name>PNP_HALOH</name>